<gene>
    <name evidence="2" type="primary">aneE</name>
    <name type="ORF">ASPACDRAFT_78840</name>
</gene>
<reference key="1">
    <citation type="journal article" date="2017" name="Genome Biol.">
        <title>Comparative genomics reveals high biological diversity and specific adaptations in the industrially and medically important fungal genus Aspergillus.</title>
        <authorList>
            <person name="de Vries R.P."/>
            <person name="Riley R."/>
            <person name="Wiebenga A."/>
            <person name="Aguilar-Osorio G."/>
            <person name="Amillis S."/>
            <person name="Uchima C.A."/>
            <person name="Anderluh G."/>
            <person name="Asadollahi M."/>
            <person name="Askin M."/>
            <person name="Barry K."/>
            <person name="Battaglia E."/>
            <person name="Bayram O."/>
            <person name="Benocci T."/>
            <person name="Braus-Stromeyer S.A."/>
            <person name="Caldana C."/>
            <person name="Canovas D."/>
            <person name="Cerqueira G.C."/>
            <person name="Chen F."/>
            <person name="Chen W."/>
            <person name="Choi C."/>
            <person name="Clum A."/>
            <person name="Dos Santos R.A."/>
            <person name="Damasio A.R."/>
            <person name="Diallinas G."/>
            <person name="Emri T."/>
            <person name="Fekete E."/>
            <person name="Flipphi M."/>
            <person name="Freyberg S."/>
            <person name="Gallo A."/>
            <person name="Gournas C."/>
            <person name="Habgood R."/>
            <person name="Hainaut M."/>
            <person name="Harispe M.L."/>
            <person name="Henrissat B."/>
            <person name="Hilden K.S."/>
            <person name="Hope R."/>
            <person name="Hossain A."/>
            <person name="Karabika E."/>
            <person name="Karaffa L."/>
            <person name="Karanyi Z."/>
            <person name="Krasevec N."/>
            <person name="Kuo A."/>
            <person name="Kusch H."/>
            <person name="LaButti K."/>
            <person name="Lagendijk E.L."/>
            <person name="Lapidus A."/>
            <person name="Levasseur A."/>
            <person name="Lindquist E."/>
            <person name="Lipzen A."/>
            <person name="Logrieco A.F."/>
            <person name="MacCabe A."/>
            <person name="Maekelae M.R."/>
            <person name="Malavazi I."/>
            <person name="Melin P."/>
            <person name="Meyer V."/>
            <person name="Mielnichuk N."/>
            <person name="Miskei M."/>
            <person name="Molnar A.P."/>
            <person name="Mule G."/>
            <person name="Ngan C.Y."/>
            <person name="Orejas M."/>
            <person name="Orosz E."/>
            <person name="Ouedraogo J.P."/>
            <person name="Overkamp K.M."/>
            <person name="Park H.-S."/>
            <person name="Perrone G."/>
            <person name="Piumi F."/>
            <person name="Punt P.J."/>
            <person name="Ram A.F."/>
            <person name="Ramon A."/>
            <person name="Rauscher S."/>
            <person name="Record E."/>
            <person name="Riano-Pachon D.M."/>
            <person name="Robert V."/>
            <person name="Roehrig J."/>
            <person name="Ruller R."/>
            <person name="Salamov A."/>
            <person name="Salih N.S."/>
            <person name="Samson R.A."/>
            <person name="Sandor E."/>
            <person name="Sanguinetti M."/>
            <person name="Schuetze T."/>
            <person name="Sepcic K."/>
            <person name="Shelest E."/>
            <person name="Sherlock G."/>
            <person name="Sophianopoulou V."/>
            <person name="Squina F.M."/>
            <person name="Sun H."/>
            <person name="Susca A."/>
            <person name="Todd R.B."/>
            <person name="Tsang A."/>
            <person name="Unkles S.E."/>
            <person name="van de Wiele N."/>
            <person name="van Rossen-Uffink D."/>
            <person name="Oliveira J.V."/>
            <person name="Vesth T.C."/>
            <person name="Visser J."/>
            <person name="Yu J.-H."/>
            <person name="Zhou M."/>
            <person name="Andersen M.R."/>
            <person name="Archer D.B."/>
            <person name="Baker S.E."/>
            <person name="Benoit I."/>
            <person name="Brakhage A.A."/>
            <person name="Braus G.H."/>
            <person name="Fischer R."/>
            <person name="Frisvad J.C."/>
            <person name="Goldman G.H."/>
            <person name="Houbraken J."/>
            <person name="Oakley B."/>
            <person name="Pocsi I."/>
            <person name="Scazzocchio C."/>
            <person name="Seiboth B."/>
            <person name="vanKuyk P.A."/>
            <person name="Wortman J."/>
            <person name="Dyer P.S."/>
            <person name="Grigoriev I.V."/>
        </authorList>
    </citation>
    <scope>NUCLEOTIDE SEQUENCE [LARGE SCALE GENOMIC DNA]</scope>
    <source>
        <strain>ATCC 16872 / CBS 172.66 / WB 5094</strain>
    </source>
</reference>
<reference key="2">
    <citation type="journal article" date="2019" name="Angew. Chem. Int. Ed.">
        <title>The biosynthesis of norsesquiterpene aculenes requires three cytochrome P450 enzymes to catalyze a stepwise demethylation process.</title>
        <authorList>
            <person name="Lee C.F."/>
            <person name="Chen L.X."/>
            <person name="Chiang C.Y."/>
            <person name="Lai C.Y."/>
            <person name="Lin H.C."/>
        </authorList>
    </citation>
    <scope>FUNCTION</scope>
    <scope>DISRUPTION PHENOTYPE</scope>
    <scope>CATALYTIC ACTIVITY</scope>
    <scope>PATHWAY</scope>
</reference>
<comment type="function">
    <text evidence="1">Thiohydrolase; part of the gene cluster that mediates the biosynthesis of aculenes, a unique type of norsesquiterpenes that contain a nordaucane skeleton linked to an L-proline moiety and are of mixed biosynthetic origin (PubMed:31618514). The pathway begins with the synthesis of dauca-4,7-diene by the terpene cyclase aneC using farnesyl pyrophosphate (FPP) as substrate (PubMed:31618514). The cytochrome P450 monooxygenase aneF then performs the initial oxidation at C-12 of dauca-4,7-diene to yield asperaculane D (PubMed:31618514). Asperaculane D is substrate of the cytochrome P450 monooxygenase aneD for C-10 hydroxylation to yield asperaculane E (PubMed:31618514). The cytochrome P450 monooxygenase aneG then converts asperaculane E into aculene D via C-2 oxidation (PubMed:31618514). The monomodular nonribosomal peptide synthtase aneB adenylates L-proline and the thiohydrolase aneE transfers this activated L-proline derivative to aculenes D and C to produce respectively aculenes B and A (PubMed:31618514). The dioxygenase aneA converts aculene D into aculene C, and aculene B into aculene A by introducing the 5,6-alkene moiety (PubMed:31618514). Asperculanes A, B, C and F, as well as 14-prolyl asperculane C, might be shunt products of the pathway (PubMed:31618514).</text>
</comment>
<comment type="catalytic activity">
    <reaction evidence="1">
        <text>aculene D + L-prolyl-[peptidyl-carrier protein] = aculene B + holo-[peptidyl-carrier protein]</text>
        <dbReference type="Rhea" id="RHEA:65104"/>
        <dbReference type="Rhea" id="RHEA-COMP:11480"/>
        <dbReference type="Rhea" id="RHEA-COMP:14109"/>
        <dbReference type="ChEBI" id="CHEBI:64479"/>
        <dbReference type="ChEBI" id="CHEBI:138622"/>
        <dbReference type="ChEBI" id="CHEBI:155910"/>
        <dbReference type="ChEBI" id="CHEBI:155913"/>
    </reaction>
    <physiologicalReaction direction="left-to-right" evidence="1">
        <dbReference type="Rhea" id="RHEA:65105"/>
    </physiologicalReaction>
</comment>
<comment type="catalytic activity">
    <reaction evidence="1">
        <text>aculene C + L-prolyl-[peptidyl-carrier protein] = aculene A + holo-[peptidyl-carrier protein]</text>
        <dbReference type="Rhea" id="RHEA:65108"/>
        <dbReference type="Rhea" id="RHEA-COMP:11480"/>
        <dbReference type="Rhea" id="RHEA-COMP:14109"/>
        <dbReference type="ChEBI" id="CHEBI:64479"/>
        <dbReference type="ChEBI" id="CHEBI:138622"/>
        <dbReference type="ChEBI" id="CHEBI:155912"/>
        <dbReference type="ChEBI" id="CHEBI:155914"/>
    </reaction>
    <physiologicalReaction direction="left-to-right" evidence="1">
        <dbReference type="Rhea" id="RHEA:65109"/>
    </physiologicalReaction>
</comment>
<comment type="pathway">
    <text evidence="1">Secondary metabolite biosynthesis.</text>
</comment>
<comment type="disruption phenotype">
    <text evidence="1">Abolishes the production of aculenes A and B and accumulates aculenes C and D.</text>
</comment>
<comment type="similarity">
    <text evidence="3">Belongs to the polyketide transferase af380 family.</text>
</comment>
<protein>
    <recommendedName>
        <fullName evidence="2">Thiohydrolase aneE</fullName>
        <ecNumber evidence="1">3.1.-.-</ecNumber>
    </recommendedName>
    <alternativeName>
        <fullName evidence="2">Aculenes biosynthesis cluster protein E</fullName>
    </alternativeName>
</protein>
<feature type="chain" id="PRO_0000449096" description="Thiohydrolase aneE">
    <location>
        <begin position="1"/>
        <end position="318"/>
    </location>
</feature>
<name>ANEE_ASPA1</name>
<evidence type="ECO:0000269" key="1">
    <source>
    </source>
</evidence>
<evidence type="ECO:0000303" key="2">
    <source>
    </source>
</evidence>
<evidence type="ECO:0000305" key="3"/>
<organism>
    <name type="scientific">Aspergillus aculeatus (strain ATCC 16872 / CBS 172.66 / WB 5094)</name>
    <dbReference type="NCBI Taxonomy" id="690307"/>
    <lineage>
        <taxon>Eukaryota</taxon>
        <taxon>Fungi</taxon>
        <taxon>Dikarya</taxon>
        <taxon>Ascomycota</taxon>
        <taxon>Pezizomycotina</taxon>
        <taxon>Eurotiomycetes</taxon>
        <taxon>Eurotiomycetidae</taxon>
        <taxon>Eurotiales</taxon>
        <taxon>Aspergillaceae</taxon>
        <taxon>Aspergillus</taxon>
        <taxon>Aspergillus subgen. Circumdati</taxon>
    </lineage>
</organism>
<accession>A0A1L9WUI4</accession>
<keyword id="KW-0378">Hydrolase</keyword>
<keyword id="KW-1185">Reference proteome</keyword>
<dbReference type="EC" id="3.1.-.-" evidence="1"/>
<dbReference type="EMBL" id="KV878977">
    <property type="protein sequence ID" value="OJJ99916.1"/>
    <property type="molecule type" value="Genomic_DNA"/>
</dbReference>
<dbReference type="RefSeq" id="XP_020056256.1">
    <property type="nucleotide sequence ID" value="XM_020205277.1"/>
</dbReference>
<dbReference type="SMR" id="A0A1L9WUI4"/>
<dbReference type="STRING" id="690307.A0A1L9WUI4"/>
<dbReference type="ESTHER" id="aspa1-anee">
    <property type="family name" value="Thiohydrolase"/>
</dbReference>
<dbReference type="GeneID" id="30979091"/>
<dbReference type="VEuPathDB" id="FungiDB:ASPACDRAFT_78840"/>
<dbReference type="OMA" id="FMARHPM"/>
<dbReference type="OrthoDB" id="2498029at2759"/>
<dbReference type="Proteomes" id="UP000184546">
    <property type="component" value="Unassembled WGS sequence"/>
</dbReference>
<dbReference type="GO" id="GO:0016787">
    <property type="term" value="F:hydrolase activity"/>
    <property type="evidence" value="ECO:0007669"/>
    <property type="project" value="UniProtKB-KW"/>
</dbReference>
<dbReference type="Gene3D" id="1.10.10.800">
    <property type="match status" value="1"/>
</dbReference>
<dbReference type="Gene3D" id="3.40.50.1820">
    <property type="entry name" value="alpha/beta hydrolase"/>
    <property type="match status" value="1"/>
</dbReference>
<dbReference type="InterPro" id="IPR029058">
    <property type="entry name" value="AB_hydrolase_fold"/>
</dbReference>
<dbReference type="InterPro" id="IPR022742">
    <property type="entry name" value="Hydrolase_4"/>
</dbReference>
<dbReference type="InterPro" id="IPR051411">
    <property type="entry name" value="Polyketide_trans_af380"/>
</dbReference>
<dbReference type="PANTHER" id="PTHR47751:SF2">
    <property type="entry name" value="DLTD N-TERMINAL DOMAIN PROTEIN (AFU_ORTHOLOGUE AFUA_8G00380)-RELATED"/>
    <property type="match status" value="1"/>
</dbReference>
<dbReference type="PANTHER" id="PTHR47751">
    <property type="entry name" value="SUPERFAMILY HYDROLASE, PUTATIVE (AFU_ORTHOLOGUE AFUA_2G16580)-RELATED"/>
    <property type="match status" value="1"/>
</dbReference>
<dbReference type="Pfam" id="PF12146">
    <property type="entry name" value="Hydrolase_4"/>
    <property type="match status" value="1"/>
</dbReference>
<dbReference type="SUPFAM" id="SSF53474">
    <property type="entry name" value="alpha/beta-Hydrolases"/>
    <property type="match status" value="1"/>
</dbReference>
<sequence>MTKDNEEKTYSEVEFLTVDGLKLRGRLYLGEANGPALVMAHGFNAVKEIVIPWAAEVFQKNGISVLLFDPRNYGESEGMPRQEVDPEKQIEDYFDAVTFLRQQPGIDPEAIGLWGVSTSGATAIGAACFDKRVRLIISVCPLIEATFREEMVPDVMAQIIREREALVAARTAGQQSPQPTLVPMINQVGVSPMGFNAIHGKNFYEEMPWFKETAPNFRPHTTTLTYYKMLRWHPLSNIRCLSPTPIQMLIPGKDDVCPTQEQLDFFEALPGPKRMEYYEDRNHHGLLLGSAFEGVMEAQVRFVQDVLAGKFALKSGSQ</sequence>
<proteinExistence type="evidence at protein level"/>